<protein>
    <recommendedName>
        <fullName evidence="4">N6-methyladenosine RNA demethylase ALKB1</fullName>
        <ecNumber evidence="3">1.14.11.53</ecNumber>
    </recommendedName>
    <alternativeName>
        <fullName evidence="5">M6A eraser ALKB1</fullName>
    </alternativeName>
    <alternativeName>
        <fullName evidence="5">Nucleic acid dioxygenase ALKB1</fullName>
    </alternativeName>
</protein>
<keyword id="KW-0963">Cytoplasm</keyword>
<keyword id="KW-0223">Dioxygenase</keyword>
<keyword id="KW-0227">DNA damage</keyword>
<keyword id="KW-0234">DNA repair</keyword>
<keyword id="KW-0408">Iron</keyword>
<keyword id="KW-0479">Metal-binding</keyword>
<keyword id="KW-0560">Oxidoreductase</keyword>
<keyword id="KW-1185">Reference proteome</keyword>
<keyword id="KW-0843">Virulence</keyword>
<organism>
    <name type="scientific">Pyricularia oryzae (strain 70-15 / ATCC MYA-4617 / FGSC 8958)</name>
    <name type="common">Rice blast fungus</name>
    <name type="synonym">Magnaporthe oryzae</name>
    <dbReference type="NCBI Taxonomy" id="242507"/>
    <lineage>
        <taxon>Eukaryota</taxon>
        <taxon>Fungi</taxon>
        <taxon>Dikarya</taxon>
        <taxon>Ascomycota</taxon>
        <taxon>Pezizomycotina</taxon>
        <taxon>Sordariomycetes</taxon>
        <taxon>Sordariomycetidae</taxon>
        <taxon>Magnaporthales</taxon>
        <taxon>Pyriculariaceae</taxon>
        <taxon>Pyricularia</taxon>
    </lineage>
</organism>
<comment type="function">
    <text evidence="3">RNA demethylase that regulates the stability of mRNAs through an m(6)A-dependent manner (PubMed:30535195). M6A is a modification present at internal sites of mRNAs and some non-coding RNAs and plays a role in mRNA stability and processing (PubMed:30535195). Plays a role in pathogenicity towards plant host (PubMed:30535195).</text>
</comment>
<comment type="catalytic activity">
    <reaction evidence="1">
        <text>an N(6)-methyladenosine in mRNA + 2-oxoglutarate + O2 = an adenosine in mRNA + formaldehyde + succinate + CO2</text>
        <dbReference type="Rhea" id="RHEA:49520"/>
        <dbReference type="Rhea" id="RHEA-COMP:12414"/>
        <dbReference type="Rhea" id="RHEA-COMP:12417"/>
        <dbReference type="ChEBI" id="CHEBI:15379"/>
        <dbReference type="ChEBI" id="CHEBI:16526"/>
        <dbReference type="ChEBI" id="CHEBI:16810"/>
        <dbReference type="ChEBI" id="CHEBI:16842"/>
        <dbReference type="ChEBI" id="CHEBI:30031"/>
        <dbReference type="ChEBI" id="CHEBI:74411"/>
        <dbReference type="ChEBI" id="CHEBI:74449"/>
        <dbReference type="EC" id="1.14.11.53"/>
    </reaction>
    <physiologicalReaction direction="left-to-right" evidence="1">
        <dbReference type="Rhea" id="RHEA:49521"/>
    </physiologicalReaction>
</comment>
<comment type="cofactor">
    <cofactor evidence="2">
        <name>Fe(2+)</name>
        <dbReference type="ChEBI" id="CHEBI:29033"/>
    </cofactor>
    <text evidence="2">Binds 1 Fe(2+) ion per subunit.</text>
</comment>
<comment type="subcellular location">
    <subcellularLocation>
        <location evidence="3">Cytoplasm</location>
        <location evidence="3">P-body</location>
    </subcellularLocation>
</comment>
<comment type="disruption phenotype">
    <text evidence="3">Does not seem to affect growth nor conidiation (PubMed:30535195). Displays milder disease lesions on rice leaves (PubMed:30535195).</text>
</comment>
<comment type="similarity">
    <text evidence="5">Belongs to the alkB family.</text>
</comment>
<proteinExistence type="inferred from homology"/>
<evidence type="ECO:0000250" key="1">
    <source>
        <dbReference type="UniProtKB" id="A0A9P4XUZ4"/>
    </source>
</evidence>
<evidence type="ECO:0000255" key="2">
    <source>
        <dbReference type="PROSITE-ProRule" id="PRU00805"/>
    </source>
</evidence>
<evidence type="ECO:0000269" key="3">
    <source>
    </source>
</evidence>
<evidence type="ECO:0000303" key="4">
    <source>
    </source>
</evidence>
<evidence type="ECO:0000305" key="5"/>
<dbReference type="EC" id="1.14.11.53" evidence="3"/>
<dbReference type="EMBL" id="CM001232">
    <property type="protein sequence ID" value="EHA54488.1"/>
    <property type="molecule type" value="Genomic_DNA"/>
</dbReference>
<dbReference type="RefSeq" id="XP_003714295.1">
    <property type="nucleotide sequence ID" value="XM_003714247.1"/>
</dbReference>
<dbReference type="SMR" id="G4MZ21"/>
<dbReference type="STRING" id="242507.G4MZ21"/>
<dbReference type="EnsemblFungi" id="MGG_01363T0">
    <property type="protein sequence ID" value="MGG_01363T0"/>
    <property type="gene ID" value="MGG_01363"/>
</dbReference>
<dbReference type="GeneID" id="2679141"/>
<dbReference type="KEGG" id="mgr:MGG_01363"/>
<dbReference type="VEuPathDB" id="FungiDB:MGG_01363"/>
<dbReference type="eggNOG" id="KOG2731">
    <property type="taxonomic scope" value="Eukaryota"/>
</dbReference>
<dbReference type="HOGENOM" id="CLU_029471_0_0_1"/>
<dbReference type="InParanoid" id="G4MZ21"/>
<dbReference type="OMA" id="CEVIRLR"/>
<dbReference type="OrthoDB" id="47845at2759"/>
<dbReference type="PHI-base" id="PHI:8649"/>
<dbReference type="Proteomes" id="UP000009058">
    <property type="component" value="Chromosome 2"/>
</dbReference>
<dbReference type="GO" id="GO:0005829">
    <property type="term" value="C:cytosol"/>
    <property type="evidence" value="ECO:0000250"/>
    <property type="project" value="PAMGO_MGG"/>
</dbReference>
<dbReference type="GO" id="GO:0005634">
    <property type="term" value="C:nucleus"/>
    <property type="evidence" value="ECO:0000250"/>
    <property type="project" value="PAMGO_MGG"/>
</dbReference>
<dbReference type="GO" id="GO:0000932">
    <property type="term" value="C:P-body"/>
    <property type="evidence" value="ECO:0007669"/>
    <property type="project" value="UniProtKB-SubCell"/>
</dbReference>
<dbReference type="GO" id="GO:0051213">
    <property type="term" value="F:dioxygenase activity"/>
    <property type="evidence" value="ECO:0007669"/>
    <property type="project" value="UniProtKB-KW"/>
</dbReference>
<dbReference type="GO" id="GO:0046872">
    <property type="term" value="F:metal ion binding"/>
    <property type="evidence" value="ECO:0007669"/>
    <property type="project" value="UniProtKB-KW"/>
</dbReference>
<dbReference type="GO" id="GO:0006281">
    <property type="term" value="P:DNA repair"/>
    <property type="evidence" value="ECO:0000250"/>
    <property type="project" value="PAMGO_MGG"/>
</dbReference>
<dbReference type="FunFam" id="2.60.120.590:FF:000014">
    <property type="entry name" value="Oxidoreductase, 2OG-Fe(II) oxygenase family family"/>
    <property type="match status" value="1"/>
</dbReference>
<dbReference type="Gene3D" id="2.60.120.590">
    <property type="entry name" value="Alpha-ketoglutarate-dependent dioxygenase AlkB-like"/>
    <property type="match status" value="1"/>
</dbReference>
<dbReference type="InterPro" id="IPR004574">
    <property type="entry name" value="Alkb"/>
</dbReference>
<dbReference type="InterPro" id="IPR027450">
    <property type="entry name" value="AlkB-like"/>
</dbReference>
<dbReference type="InterPro" id="IPR037151">
    <property type="entry name" value="AlkB-like_sf"/>
</dbReference>
<dbReference type="InterPro" id="IPR005123">
    <property type="entry name" value="Oxoglu/Fe-dep_dioxygenase_dom"/>
</dbReference>
<dbReference type="PANTHER" id="PTHR16557">
    <property type="entry name" value="ALKYLATED DNA REPAIR PROTEIN ALKB-RELATED"/>
    <property type="match status" value="1"/>
</dbReference>
<dbReference type="PANTHER" id="PTHR16557:SF2">
    <property type="entry name" value="NUCLEIC ACID DIOXYGENASE ALKBH1"/>
    <property type="match status" value="1"/>
</dbReference>
<dbReference type="Pfam" id="PF13532">
    <property type="entry name" value="2OG-FeII_Oxy_2"/>
    <property type="match status" value="1"/>
</dbReference>
<dbReference type="SUPFAM" id="SSF51197">
    <property type="entry name" value="Clavaminate synthase-like"/>
    <property type="match status" value="1"/>
</dbReference>
<dbReference type="PROSITE" id="PS51471">
    <property type="entry name" value="FE2OG_OXY"/>
    <property type="match status" value="1"/>
</dbReference>
<name>ALKB1_PYRO7</name>
<feature type="chain" id="PRO_0000462154" description="N6-methyladenosine RNA demethylase ALKB1">
    <location>
        <begin position="1"/>
        <end position="353"/>
    </location>
</feature>
<feature type="domain" description="Fe2OG dioxygenase" evidence="2">
    <location>
        <begin position="223"/>
        <end position="352"/>
    </location>
</feature>
<feature type="binding site" evidence="2">
    <location>
        <position position="241"/>
    </location>
    <ligand>
        <name>Fe cation</name>
        <dbReference type="ChEBI" id="CHEBI:24875"/>
    </ligand>
</feature>
<feature type="binding site" evidence="2">
    <location>
        <position position="243"/>
    </location>
    <ligand>
        <name>Fe cation</name>
        <dbReference type="ChEBI" id="CHEBI:24875"/>
    </ligand>
</feature>
<feature type="binding site" evidence="2">
    <location>
        <position position="308"/>
    </location>
    <ligand>
        <name>Fe cation</name>
        <dbReference type="ChEBI" id="CHEBI:24875"/>
    </ligand>
</feature>
<feature type="binding site" evidence="2">
    <location>
        <position position="343"/>
    </location>
    <ligand>
        <name>2-oxoglutarate</name>
        <dbReference type="ChEBI" id="CHEBI:16810"/>
    </ligand>
</feature>
<reference key="1">
    <citation type="journal article" date="2005" name="Nature">
        <title>The genome sequence of the rice blast fungus Magnaporthe grisea.</title>
        <authorList>
            <person name="Dean R.A."/>
            <person name="Talbot N.J."/>
            <person name="Ebbole D.J."/>
            <person name="Farman M.L."/>
            <person name="Mitchell T.K."/>
            <person name="Orbach M.J."/>
            <person name="Thon M.R."/>
            <person name="Kulkarni R."/>
            <person name="Xu J.-R."/>
            <person name="Pan H."/>
            <person name="Read N.D."/>
            <person name="Lee Y.-H."/>
            <person name="Carbone I."/>
            <person name="Brown D."/>
            <person name="Oh Y.Y."/>
            <person name="Donofrio N."/>
            <person name="Jeong J.S."/>
            <person name="Soanes D.M."/>
            <person name="Djonovic S."/>
            <person name="Kolomiets E."/>
            <person name="Rehmeyer C."/>
            <person name="Li W."/>
            <person name="Harding M."/>
            <person name="Kim S."/>
            <person name="Lebrun M.-H."/>
            <person name="Bohnert H."/>
            <person name="Coughlan S."/>
            <person name="Butler J."/>
            <person name="Calvo S.E."/>
            <person name="Ma L.-J."/>
            <person name="Nicol R."/>
            <person name="Purcell S."/>
            <person name="Nusbaum C."/>
            <person name="Galagan J.E."/>
            <person name="Birren B.W."/>
        </authorList>
    </citation>
    <scope>NUCLEOTIDE SEQUENCE [LARGE SCALE GENOMIC DNA]</scope>
    <source>
        <strain>70-15 / ATCC MYA-4617 / FGSC 8958</strain>
    </source>
</reference>
<reference key="2">
    <citation type="journal article" date="2019" name="FEMS Microbiol. Lett.">
        <title>N6-methyladenosine RNA methylation is involved in virulence of the rice blast fungus Pyricularia oryzae (syn. Magnaporthe oryzae).</title>
        <authorList>
            <person name="Shi Y."/>
            <person name="Wang H."/>
            <person name="Wang J."/>
            <person name="Liu X."/>
            <person name="Lin F."/>
            <person name="Lu J."/>
        </authorList>
    </citation>
    <scope>FUNCTION</scope>
    <scope>DISRUPTION PHENOTYPE</scope>
    <scope>SUBCELLULAR LOCATION</scope>
</reference>
<sequence length="353" mass="40127">MTVNLTELDAHEQPSDQMRAIWKSYSRADKEELLLNGAIDDLEKPEKAAEFVVAGTVPAATLTKGFAFLGSGFDAAASDAPIYYHPLLPGLLIFPSIVPLEVQKTLLSKLIHRDLSVPAHQTNMHLHYELPYVERKPTDGEGEPEDCRQSFFSHSPDSPVRFQPKDPDVHKPLSMKQVMDRRLHWVTLGGQYDWTNRVYPEEEPPKFPPDVAGFLETVFPDTIAQAAIVNFYTPGDTMMMHRDVSEETDKGLVSLSLGCDGLFMIAPSDIGKMSEEERPEDVKKQYLLLRLRSGDAIYMIKESRYAWHGVPKVLKGTCPEALEDWPAEDGRFEEWRGWMKNKRINLNVRQMRE</sequence>
<accession>G4MZ21</accession>
<gene>
    <name evidence="4" type="primary">ALKB1</name>
    <name type="ORF">MGG_01363</name>
</gene>